<comment type="function">
    <text evidence="1">Produces ATP from ADP in the presence of a proton gradient across the membrane. The V-type alpha chain is a catalytic subunit.</text>
</comment>
<comment type="catalytic activity">
    <reaction evidence="1">
        <text>ATP + H2O + 4 H(+)(in) = ADP + phosphate + 5 H(+)(out)</text>
        <dbReference type="Rhea" id="RHEA:57720"/>
        <dbReference type="ChEBI" id="CHEBI:15377"/>
        <dbReference type="ChEBI" id="CHEBI:15378"/>
        <dbReference type="ChEBI" id="CHEBI:30616"/>
        <dbReference type="ChEBI" id="CHEBI:43474"/>
        <dbReference type="ChEBI" id="CHEBI:456216"/>
        <dbReference type="EC" id="7.1.2.2"/>
    </reaction>
</comment>
<comment type="similarity">
    <text evidence="1">Belongs to the ATPase alpha/beta chains family.</text>
</comment>
<accession>B0K5J0</accession>
<organism>
    <name type="scientific">Thermoanaerobacter sp. (strain X514)</name>
    <dbReference type="NCBI Taxonomy" id="399726"/>
    <lineage>
        <taxon>Bacteria</taxon>
        <taxon>Bacillati</taxon>
        <taxon>Bacillota</taxon>
        <taxon>Clostridia</taxon>
        <taxon>Thermoanaerobacterales</taxon>
        <taxon>Thermoanaerobacteraceae</taxon>
        <taxon>Thermoanaerobacter</taxon>
    </lineage>
</organism>
<name>VATA_THEPX</name>
<protein>
    <recommendedName>
        <fullName evidence="1">V-type ATP synthase alpha chain</fullName>
        <ecNumber evidence="1">7.1.2.2</ecNumber>
    </recommendedName>
    <alternativeName>
        <fullName evidence="1">V-ATPase subunit A</fullName>
    </alternativeName>
</protein>
<reference key="1">
    <citation type="submission" date="2008-01" db="EMBL/GenBank/DDBJ databases">
        <title>Complete sequence of Thermoanaerobacter sp. X514.</title>
        <authorList>
            <consortium name="US DOE Joint Genome Institute"/>
            <person name="Copeland A."/>
            <person name="Lucas S."/>
            <person name="Lapidus A."/>
            <person name="Barry K."/>
            <person name="Glavina del Rio T."/>
            <person name="Dalin E."/>
            <person name="Tice H."/>
            <person name="Pitluck S."/>
            <person name="Bruce D."/>
            <person name="Goodwin L."/>
            <person name="Saunders E."/>
            <person name="Brettin T."/>
            <person name="Detter J.C."/>
            <person name="Han C."/>
            <person name="Schmutz J."/>
            <person name="Larimer F."/>
            <person name="Land M."/>
            <person name="Hauser L."/>
            <person name="Kyrpides N."/>
            <person name="Kim E."/>
            <person name="Hemme C."/>
            <person name="Fields M.W."/>
            <person name="He Z."/>
            <person name="Zhou J."/>
            <person name="Richardson P."/>
        </authorList>
    </citation>
    <scope>NUCLEOTIDE SEQUENCE [LARGE SCALE GENOMIC DNA]</scope>
    <source>
        <strain>X514</strain>
    </source>
</reference>
<sequence length="590" mass="65432">MSQGIITKVSGPLVVAEGLPEAKMFDVVKVGNQGLIGEIIEIRGERVSIQVYEETSGLGPGDPVVSTGEPLSVELGPGMLEGIFDGIQRPLDVIEKKVGSFITRGIDVPSLNREKKWKFTPKVKSGDKVSGGDIIGTVQETVIVEHRIMVPPAISGIVEDIREGEYTVTEPIARIKTDSGQIVEITMMQKWPVRKARPYKEKLPPEIPMPTGQRVIDTLFPVTKGGTACIPGPFGSGKTVVQHQLAKWADAEIVVYIGCGERGNEMTDVLLEFPELKDPKTEEPLMKRTVLIANTSNMPVAAREASIYTGITIAEYFRDMGYSVALMADSTSRWAEALREMSGRLEEMPGEEGYPAYLARRLAEFYERAGRVICLGSDNREGALTVVGAVSPPGGDLSEPVTQATLRVVKVFWALDSELAYARHFPAINWLTSYSLYSDVVEDYMNKNVSSDWGELRSEAMRLLQEEASLQEIVRLVGIDVLSTRDRLVLEVARSIREDFLHQNAFHEVDTYSSMEKQYRMLKLIMIFYQEAQKALEKGVPFSEIEKHPVREKIARAKYVEESKLTVFDEIEKEIKKAMQGLIEGGAADA</sequence>
<keyword id="KW-0066">ATP synthesis</keyword>
<keyword id="KW-0067">ATP-binding</keyword>
<keyword id="KW-0375">Hydrogen ion transport</keyword>
<keyword id="KW-0406">Ion transport</keyword>
<keyword id="KW-0547">Nucleotide-binding</keyword>
<keyword id="KW-1278">Translocase</keyword>
<keyword id="KW-0813">Transport</keyword>
<evidence type="ECO:0000255" key="1">
    <source>
        <dbReference type="HAMAP-Rule" id="MF_00309"/>
    </source>
</evidence>
<gene>
    <name evidence="1" type="primary">atpA</name>
    <name type="ordered locus">Teth514_2364</name>
</gene>
<proteinExistence type="inferred from homology"/>
<dbReference type="EC" id="7.1.2.2" evidence="1"/>
<dbReference type="EMBL" id="CP000923">
    <property type="protein sequence ID" value="ABY93624.1"/>
    <property type="molecule type" value="Genomic_DNA"/>
</dbReference>
<dbReference type="RefSeq" id="WP_009052085.1">
    <property type="nucleotide sequence ID" value="NC_010320.1"/>
</dbReference>
<dbReference type="SMR" id="B0K5J0"/>
<dbReference type="KEGG" id="tex:Teth514_2364"/>
<dbReference type="HOGENOM" id="CLU_008162_3_1_9"/>
<dbReference type="Proteomes" id="UP000002155">
    <property type="component" value="Chromosome"/>
</dbReference>
<dbReference type="GO" id="GO:0045259">
    <property type="term" value="C:proton-transporting ATP synthase complex"/>
    <property type="evidence" value="ECO:0007669"/>
    <property type="project" value="UniProtKB-ARBA"/>
</dbReference>
<dbReference type="GO" id="GO:0033178">
    <property type="term" value="C:proton-transporting two-sector ATPase complex, catalytic domain"/>
    <property type="evidence" value="ECO:0007669"/>
    <property type="project" value="InterPro"/>
</dbReference>
<dbReference type="GO" id="GO:0005524">
    <property type="term" value="F:ATP binding"/>
    <property type="evidence" value="ECO:0007669"/>
    <property type="project" value="UniProtKB-UniRule"/>
</dbReference>
<dbReference type="GO" id="GO:0016887">
    <property type="term" value="F:ATP hydrolysis activity"/>
    <property type="evidence" value="ECO:0007669"/>
    <property type="project" value="InterPro"/>
</dbReference>
<dbReference type="GO" id="GO:0046933">
    <property type="term" value="F:proton-transporting ATP synthase activity, rotational mechanism"/>
    <property type="evidence" value="ECO:0007669"/>
    <property type="project" value="UniProtKB-UniRule"/>
</dbReference>
<dbReference type="GO" id="GO:0046961">
    <property type="term" value="F:proton-transporting ATPase activity, rotational mechanism"/>
    <property type="evidence" value="ECO:0007669"/>
    <property type="project" value="InterPro"/>
</dbReference>
<dbReference type="GO" id="GO:0042777">
    <property type="term" value="P:proton motive force-driven plasma membrane ATP synthesis"/>
    <property type="evidence" value="ECO:0007669"/>
    <property type="project" value="UniProtKB-UniRule"/>
</dbReference>
<dbReference type="CDD" id="cd18111">
    <property type="entry name" value="ATP-synt_V_A-type_alpha_C"/>
    <property type="match status" value="1"/>
</dbReference>
<dbReference type="CDD" id="cd18119">
    <property type="entry name" value="ATP-synt_V_A-type_alpha_N"/>
    <property type="match status" value="1"/>
</dbReference>
<dbReference type="CDD" id="cd01134">
    <property type="entry name" value="V_A-ATPase_A"/>
    <property type="match status" value="1"/>
</dbReference>
<dbReference type="FunFam" id="3.40.50.300:FF:000675">
    <property type="entry name" value="V-type ATP synthase alpha chain"/>
    <property type="match status" value="1"/>
</dbReference>
<dbReference type="FunFam" id="1.10.1140.10:FF:000002">
    <property type="entry name" value="V-type proton ATPase catalytic subunit A"/>
    <property type="match status" value="1"/>
</dbReference>
<dbReference type="FunFam" id="2.40.30.20:FF:000002">
    <property type="entry name" value="V-type proton ATPase catalytic subunit A"/>
    <property type="match status" value="1"/>
</dbReference>
<dbReference type="FunFam" id="2.40.50.100:FF:000008">
    <property type="entry name" value="V-type proton ATPase catalytic subunit A"/>
    <property type="match status" value="1"/>
</dbReference>
<dbReference type="Gene3D" id="2.40.30.20">
    <property type="match status" value="1"/>
</dbReference>
<dbReference type="Gene3D" id="2.40.50.100">
    <property type="match status" value="1"/>
</dbReference>
<dbReference type="Gene3D" id="1.10.1140.10">
    <property type="entry name" value="Bovine Mitochondrial F1-atpase, Atp Synthase Beta Chain, Chain D, domain 3"/>
    <property type="match status" value="1"/>
</dbReference>
<dbReference type="Gene3D" id="3.40.50.300">
    <property type="entry name" value="P-loop containing nucleotide triphosphate hydrolases"/>
    <property type="match status" value="1"/>
</dbReference>
<dbReference type="HAMAP" id="MF_00309">
    <property type="entry name" value="ATP_synth_A_arch"/>
    <property type="match status" value="1"/>
</dbReference>
<dbReference type="InterPro" id="IPR003593">
    <property type="entry name" value="AAA+_ATPase"/>
</dbReference>
<dbReference type="InterPro" id="IPR055190">
    <property type="entry name" value="ATP-synt_VA_C"/>
</dbReference>
<dbReference type="InterPro" id="IPR031686">
    <property type="entry name" value="ATP-synth_a_Xtn"/>
</dbReference>
<dbReference type="InterPro" id="IPR023366">
    <property type="entry name" value="ATP_synth_asu-like_sf"/>
</dbReference>
<dbReference type="InterPro" id="IPR005726">
    <property type="entry name" value="ATP_synth_asu_arc"/>
</dbReference>
<dbReference type="InterPro" id="IPR020003">
    <property type="entry name" value="ATPase_a/bsu_AS"/>
</dbReference>
<dbReference type="InterPro" id="IPR004100">
    <property type="entry name" value="ATPase_F1/V1/A1_a/bsu_N"/>
</dbReference>
<dbReference type="InterPro" id="IPR036121">
    <property type="entry name" value="ATPase_F1/V1/A1_a/bsu_N_sf"/>
</dbReference>
<dbReference type="InterPro" id="IPR000194">
    <property type="entry name" value="ATPase_F1/V1/A1_a/bsu_nucl-bd"/>
</dbReference>
<dbReference type="InterPro" id="IPR024034">
    <property type="entry name" value="ATPase_F1/V1_b/a_C"/>
</dbReference>
<dbReference type="InterPro" id="IPR027417">
    <property type="entry name" value="P-loop_NTPase"/>
</dbReference>
<dbReference type="InterPro" id="IPR022878">
    <property type="entry name" value="V-ATPase_asu"/>
</dbReference>
<dbReference type="NCBIfam" id="TIGR01043">
    <property type="entry name" value="ATP_syn_A_arch"/>
    <property type="match status" value="1"/>
</dbReference>
<dbReference type="NCBIfam" id="NF003220">
    <property type="entry name" value="PRK04192.1"/>
    <property type="match status" value="1"/>
</dbReference>
<dbReference type="PANTHER" id="PTHR43607:SF1">
    <property type="entry name" value="H(+)-TRANSPORTING TWO-SECTOR ATPASE"/>
    <property type="match status" value="1"/>
</dbReference>
<dbReference type="PANTHER" id="PTHR43607">
    <property type="entry name" value="V-TYPE PROTON ATPASE CATALYTIC SUBUNIT A"/>
    <property type="match status" value="1"/>
</dbReference>
<dbReference type="Pfam" id="PF00006">
    <property type="entry name" value="ATP-synt_ab"/>
    <property type="match status" value="1"/>
</dbReference>
<dbReference type="Pfam" id="PF02874">
    <property type="entry name" value="ATP-synt_ab_N"/>
    <property type="match status" value="1"/>
</dbReference>
<dbReference type="Pfam" id="PF16886">
    <property type="entry name" value="ATP-synt_ab_Xtn"/>
    <property type="match status" value="1"/>
</dbReference>
<dbReference type="Pfam" id="PF22919">
    <property type="entry name" value="ATP-synt_VA_C"/>
    <property type="match status" value="1"/>
</dbReference>
<dbReference type="SMART" id="SM00382">
    <property type="entry name" value="AAA"/>
    <property type="match status" value="1"/>
</dbReference>
<dbReference type="SUPFAM" id="SSF47917">
    <property type="entry name" value="C-terminal domain of alpha and beta subunits of F1 ATP synthase"/>
    <property type="match status" value="1"/>
</dbReference>
<dbReference type="SUPFAM" id="SSF50615">
    <property type="entry name" value="N-terminal domain of alpha and beta subunits of F1 ATP synthase"/>
    <property type="match status" value="1"/>
</dbReference>
<dbReference type="SUPFAM" id="SSF52540">
    <property type="entry name" value="P-loop containing nucleoside triphosphate hydrolases"/>
    <property type="match status" value="1"/>
</dbReference>
<dbReference type="PROSITE" id="PS00152">
    <property type="entry name" value="ATPASE_ALPHA_BETA"/>
    <property type="match status" value="1"/>
</dbReference>
<feature type="chain" id="PRO_1000115649" description="V-type ATP synthase alpha chain">
    <location>
        <begin position="1"/>
        <end position="590"/>
    </location>
</feature>
<feature type="binding site" evidence="1">
    <location>
        <begin position="232"/>
        <end position="239"/>
    </location>
    <ligand>
        <name>ATP</name>
        <dbReference type="ChEBI" id="CHEBI:30616"/>
    </ligand>
</feature>